<dbReference type="EC" id="2.5.1.16" evidence="1"/>
<dbReference type="EMBL" id="CP001277">
    <property type="protein sequence ID" value="ACQ67266.1"/>
    <property type="molecule type" value="Genomic_DNA"/>
</dbReference>
<dbReference type="RefSeq" id="WP_012738223.1">
    <property type="nucleotide sequence ID" value="NC_012751.1"/>
</dbReference>
<dbReference type="SMR" id="C4K3X3"/>
<dbReference type="STRING" id="572265.HDEF_0512"/>
<dbReference type="GeneID" id="66260397"/>
<dbReference type="KEGG" id="hde:HDEF_0512"/>
<dbReference type="eggNOG" id="COG0421">
    <property type="taxonomic scope" value="Bacteria"/>
</dbReference>
<dbReference type="HOGENOM" id="CLU_048199_1_0_6"/>
<dbReference type="UniPathway" id="UPA00248">
    <property type="reaction ID" value="UER00314"/>
</dbReference>
<dbReference type="Proteomes" id="UP000002334">
    <property type="component" value="Chromosome"/>
</dbReference>
<dbReference type="GO" id="GO:0005829">
    <property type="term" value="C:cytosol"/>
    <property type="evidence" value="ECO:0007669"/>
    <property type="project" value="TreeGrafter"/>
</dbReference>
<dbReference type="GO" id="GO:0004766">
    <property type="term" value="F:spermidine synthase activity"/>
    <property type="evidence" value="ECO:0007669"/>
    <property type="project" value="UniProtKB-UniRule"/>
</dbReference>
<dbReference type="GO" id="GO:0008295">
    <property type="term" value="P:spermidine biosynthetic process"/>
    <property type="evidence" value="ECO:0007669"/>
    <property type="project" value="UniProtKB-UniRule"/>
</dbReference>
<dbReference type="CDD" id="cd02440">
    <property type="entry name" value="AdoMet_MTases"/>
    <property type="match status" value="1"/>
</dbReference>
<dbReference type="FunFam" id="2.30.140.10:FF:000002">
    <property type="entry name" value="Polyamine aminopropyltransferase"/>
    <property type="match status" value="1"/>
</dbReference>
<dbReference type="Gene3D" id="2.30.140.10">
    <property type="entry name" value="Spermidine synthase, tetramerisation domain"/>
    <property type="match status" value="1"/>
</dbReference>
<dbReference type="Gene3D" id="3.40.50.150">
    <property type="entry name" value="Vaccinia Virus protein VP39"/>
    <property type="match status" value="1"/>
</dbReference>
<dbReference type="HAMAP" id="MF_00198">
    <property type="entry name" value="Spermidine_synth"/>
    <property type="match status" value="1"/>
</dbReference>
<dbReference type="InterPro" id="IPR030374">
    <property type="entry name" value="PABS"/>
</dbReference>
<dbReference type="InterPro" id="IPR030373">
    <property type="entry name" value="PABS_CS"/>
</dbReference>
<dbReference type="InterPro" id="IPR029063">
    <property type="entry name" value="SAM-dependent_MTases_sf"/>
</dbReference>
<dbReference type="InterPro" id="IPR001045">
    <property type="entry name" value="Spermi_synthase"/>
</dbReference>
<dbReference type="InterPro" id="IPR035246">
    <property type="entry name" value="Spermidine_synt_N"/>
</dbReference>
<dbReference type="InterPro" id="IPR037163">
    <property type="entry name" value="Spermidine_synt_N_sf"/>
</dbReference>
<dbReference type="NCBIfam" id="NF037959">
    <property type="entry name" value="MFS_SpdSyn"/>
    <property type="match status" value="1"/>
</dbReference>
<dbReference type="NCBIfam" id="NF002010">
    <property type="entry name" value="PRK00811.1"/>
    <property type="match status" value="1"/>
</dbReference>
<dbReference type="NCBIfam" id="TIGR00417">
    <property type="entry name" value="speE"/>
    <property type="match status" value="1"/>
</dbReference>
<dbReference type="PANTHER" id="PTHR11558:SF11">
    <property type="entry name" value="SPERMIDINE SYNTHASE"/>
    <property type="match status" value="1"/>
</dbReference>
<dbReference type="PANTHER" id="PTHR11558">
    <property type="entry name" value="SPERMIDINE/SPERMINE SYNTHASE"/>
    <property type="match status" value="1"/>
</dbReference>
<dbReference type="Pfam" id="PF17284">
    <property type="entry name" value="Spermine_synt_N"/>
    <property type="match status" value="1"/>
</dbReference>
<dbReference type="Pfam" id="PF01564">
    <property type="entry name" value="Spermine_synth"/>
    <property type="match status" value="1"/>
</dbReference>
<dbReference type="SUPFAM" id="SSF53335">
    <property type="entry name" value="S-adenosyl-L-methionine-dependent methyltransferases"/>
    <property type="match status" value="1"/>
</dbReference>
<dbReference type="PROSITE" id="PS01330">
    <property type="entry name" value="PABS_1"/>
    <property type="match status" value="1"/>
</dbReference>
<dbReference type="PROSITE" id="PS51006">
    <property type="entry name" value="PABS_2"/>
    <property type="match status" value="1"/>
</dbReference>
<protein>
    <recommendedName>
        <fullName evidence="1">Polyamine aminopropyltransferase</fullName>
    </recommendedName>
    <alternativeName>
        <fullName evidence="1">Putrescine aminopropyltransferase</fullName>
        <shortName evidence="1">PAPT</shortName>
    </alternativeName>
    <alternativeName>
        <fullName evidence="1">Spermidine synthase</fullName>
        <shortName evidence="1">SPDS</shortName>
        <shortName evidence="1">SPDSY</shortName>
        <ecNumber evidence="1">2.5.1.16</ecNumber>
    </alternativeName>
</protein>
<name>SPEE_HAMD5</name>
<proteinExistence type="inferred from homology"/>
<evidence type="ECO:0000255" key="1">
    <source>
        <dbReference type="HAMAP-Rule" id="MF_00198"/>
    </source>
</evidence>
<reference key="1">
    <citation type="journal article" date="2009" name="Proc. Natl. Acad. Sci. U.S.A.">
        <title>Hamiltonella defensa, genome evolution of protective bacterial endosymbiont from pathogenic ancestors.</title>
        <authorList>
            <person name="Degnan P.H."/>
            <person name="Yu Y."/>
            <person name="Sisneros N."/>
            <person name="Wing R.A."/>
            <person name="Moran N.A."/>
        </authorList>
    </citation>
    <scope>NUCLEOTIDE SEQUENCE [LARGE SCALE GENOMIC DNA]</scope>
    <source>
        <strain>5AT</strain>
    </source>
</reference>
<gene>
    <name evidence="1" type="primary">speE</name>
    <name type="ordered locus">HDEF_0512</name>
</gene>
<accession>C4K3X3</accession>
<feature type="chain" id="PRO_1000204075" description="Polyamine aminopropyltransferase">
    <location>
        <begin position="1"/>
        <end position="290"/>
    </location>
</feature>
<feature type="domain" description="PABS" evidence="1">
    <location>
        <begin position="5"/>
        <end position="238"/>
    </location>
</feature>
<feature type="active site" description="Proton acceptor" evidence="1">
    <location>
        <position position="158"/>
    </location>
</feature>
<feature type="binding site" evidence="1">
    <location>
        <position position="33"/>
    </location>
    <ligand>
        <name>S-methyl-5'-thioadenosine</name>
        <dbReference type="ChEBI" id="CHEBI:17509"/>
    </ligand>
</feature>
<feature type="binding site" evidence="1">
    <location>
        <position position="64"/>
    </location>
    <ligand>
        <name>spermidine</name>
        <dbReference type="ChEBI" id="CHEBI:57834"/>
    </ligand>
</feature>
<feature type="binding site" evidence="1">
    <location>
        <position position="88"/>
    </location>
    <ligand>
        <name>spermidine</name>
        <dbReference type="ChEBI" id="CHEBI:57834"/>
    </ligand>
</feature>
<feature type="binding site" evidence="1">
    <location>
        <position position="108"/>
    </location>
    <ligand>
        <name>S-methyl-5'-thioadenosine</name>
        <dbReference type="ChEBI" id="CHEBI:17509"/>
    </ligand>
</feature>
<feature type="binding site" evidence="1">
    <location>
        <begin position="140"/>
        <end position="141"/>
    </location>
    <ligand>
        <name>S-methyl-5'-thioadenosine</name>
        <dbReference type="ChEBI" id="CHEBI:17509"/>
    </ligand>
</feature>
<feature type="binding site" evidence="1">
    <location>
        <begin position="158"/>
        <end position="161"/>
    </location>
    <ligand>
        <name>spermidine</name>
        <dbReference type="ChEBI" id="CHEBI:57834"/>
    </ligand>
</feature>
<feature type="binding site" evidence="1">
    <location>
        <position position="165"/>
    </location>
    <ligand>
        <name>S-methyl-5'-thioadenosine</name>
        <dbReference type="ChEBI" id="CHEBI:17509"/>
    </ligand>
</feature>
<comment type="function">
    <text evidence="1">Catalyzes the irreversible transfer of a propylamine group from the amino donor S-adenosylmethioninamine (decarboxy-AdoMet) to putrescine (1,4-diaminobutane) to yield spermidine.</text>
</comment>
<comment type="catalytic activity">
    <reaction evidence="1">
        <text>S-adenosyl 3-(methylsulfanyl)propylamine + putrescine = S-methyl-5'-thioadenosine + spermidine + H(+)</text>
        <dbReference type="Rhea" id="RHEA:12721"/>
        <dbReference type="ChEBI" id="CHEBI:15378"/>
        <dbReference type="ChEBI" id="CHEBI:17509"/>
        <dbReference type="ChEBI" id="CHEBI:57443"/>
        <dbReference type="ChEBI" id="CHEBI:57834"/>
        <dbReference type="ChEBI" id="CHEBI:326268"/>
        <dbReference type="EC" id="2.5.1.16"/>
    </reaction>
</comment>
<comment type="pathway">
    <text evidence="1">Amine and polyamine biosynthesis; spermidine biosynthesis; spermidine from putrescine: step 1/1.</text>
</comment>
<comment type="subunit">
    <text evidence="1">Homodimer or homotetramer.</text>
</comment>
<comment type="subcellular location">
    <subcellularLocation>
        <location evidence="1">Cytoplasm</location>
    </subcellularLocation>
</comment>
<comment type="similarity">
    <text evidence="1">Belongs to the spermidine/spermine synthase family.</text>
</comment>
<organism>
    <name type="scientific">Hamiltonella defensa subsp. Acyrthosiphon pisum (strain 5AT)</name>
    <dbReference type="NCBI Taxonomy" id="572265"/>
    <lineage>
        <taxon>Bacteria</taxon>
        <taxon>Pseudomonadati</taxon>
        <taxon>Pseudomonadota</taxon>
        <taxon>Gammaproteobacteria</taxon>
        <taxon>Enterobacterales</taxon>
        <taxon>Enterobacteriaceae</taxon>
        <taxon>aphid secondary symbionts</taxon>
        <taxon>Candidatus Hamiltonella</taxon>
    </lineage>
</organism>
<keyword id="KW-0963">Cytoplasm</keyword>
<keyword id="KW-0620">Polyamine biosynthesis</keyword>
<keyword id="KW-0745">Spermidine biosynthesis</keyword>
<keyword id="KW-0808">Transferase</keyword>
<sequence>MSQKQLWYEKLHSSFGQYFSIKEVLYRDKTDHQDLIIFDTEEFGRVMALNHVVQTTERDEFIYHEMMTHVPLLAHGDAKKVLIIGGGDGGILREVCRHAGVKEIIMVEIDQDVVNLCQEYFPHHHAGAYDDPRFQLKIDDGAHFVEQTNHRFDLIISDSTDPIGPGEHLFKSSFYQACRRILNAGGLFVAQNGVCFLQQTEVINTYQRLMPYFSDVSFYQAAIPTYYGGIMTFAWASENANLRRIGLNDLESRFADSGLKSCRYYNPFVHFASFALPQYLIEALAKKAPK</sequence>